<dbReference type="EC" id="2.7.11.22" evidence="1"/>
<dbReference type="EMBL" id="BX284602">
    <property type="protein sequence ID" value="CCD61471.1"/>
    <property type="molecule type" value="Genomic_DNA"/>
</dbReference>
<dbReference type="EMBL" id="BX284602">
    <property type="protein sequence ID" value="SPC47283.1"/>
    <property type="molecule type" value="Genomic_DNA"/>
</dbReference>
<dbReference type="PIR" id="C88216">
    <property type="entry name" value="C88216"/>
</dbReference>
<dbReference type="RefSeq" id="NP_001348696.1">
    <molecule id="Q09437-2"/>
    <property type="nucleotide sequence ID" value="NM_001361863.3"/>
</dbReference>
<dbReference type="RefSeq" id="NP_495617.1">
    <molecule id="Q09437-1"/>
    <property type="nucleotide sequence ID" value="NM_063216.6"/>
</dbReference>
<dbReference type="SMR" id="Q09437"/>
<dbReference type="BioGRID" id="39578">
    <property type="interactions" value="4"/>
</dbReference>
<dbReference type="FunCoup" id="Q09437">
    <property type="interactions" value="2295"/>
</dbReference>
<dbReference type="IntAct" id="Q09437">
    <property type="interactions" value="1"/>
</dbReference>
<dbReference type="STRING" id="6239.B0495.2a.1"/>
<dbReference type="iPTMnet" id="Q09437"/>
<dbReference type="PaxDb" id="6239-B0495.2"/>
<dbReference type="PeptideAtlas" id="Q09437"/>
<dbReference type="EnsemblMetazoa" id="B0495.2a.1">
    <molecule id="Q09437-1"/>
    <property type="protein sequence ID" value="B0495.2a.1"/>
    <property type="gene ID" value="WBGene00015203"/>
</dbReference>
<dbReference type="EnsemblMetazoa" id="B0495.2b.1">
    <molecule id="Q09437-2"/>
    <property type="protein sequence ID" value="B0495.2b.1"/>
    <property type="gene ID" value="WBGene00015203"/>
</dbReference>
<dbReference type="GeneID" id="174244"/>
<dbReference type="KEGG" id="cel:CELE_B0495.2"/>
<dbReference type="UCSC" id="B0495.2">
    <molecule id="Q09437-1"/>
    <property type="organism name" value="c. elegans"/>
</dbReference>
<dbReference type="AGR" id="WB:WBGene00015203"/>
<dbReference type="CTD" id="174244"/>
<dbReference type="WormBase" id="B0495.2a">
    <molecule id="Q09437-1"/>
    <property type="protein sequence ID" value="CE01761"/>
    <property type="gene ID" value="WBGene00015203"/>
    <property type="gene designation" value="cdk-11.1"/>
</dbReference>
<dbReference type="WormBase" id="B0495.2b">
    <molecule id="Q09437-2"/>
    <property type="protein sequence ID" value="CE52485"/>
    <property type="gene ID" value="WBGene00015203"/>
    <property type="gene designation" value="cdk-11.1"/>
</dbReference>
<dbReference type="eggNOG" id="KOG0663">
    <property type="taxonomic scope" value="Eukaryota"/>
</dbReference>
<dbReference type="GeneTree" id="ENSGT00970000196694"/>
<dbReference type="HOGENOM" id="CLU_000288_91_3_1"/>
<dbReference type="InParanoid" id="Q09437"/>
<dbReference type="OMA" id="IVEFTID"/>
<dbReference type="OrthoDB" id="647at2759"/>
<dbReference type="PhylomeDB" id="Q09437"/>
<dbReference type="PRO" id="PR:Q09437"/>
<dbReference type="Proteomes" id="UP000001940">
    <property type="component" value="Chromosome II"/>
</dbReference>
<dbReference type="Bgee" id="WBGene00015203">
    <property type="expression patterns" value="Expressed in germ line (C elegans) and 4 other cell types or tissues"/>
</dbReference>
<dbReference type="GO" id="GO:0005737">
    <property type="term" value="C:cytoplasm"/>
    <property type="evidence" value="ECO:0000314"/>
    <property type="project" value="UniProtKB"/>
</dbReference>
<dbReference type="GO" id="GO:0005634">
    <property type="term" value="C:nucleus"/>
    <property type="evidence" value="ECO:0000314"/>
    <property type="project" value="UniProtKB"/>
</dbReference>
<dbReference type="GO" id="GO:0005524">
    <property type="term" value="F:ATP binding"/>
    <property type="evidence" value="ECO:0007669"/>
    <property type="project" value="UniProtKB-KW"/>
</dbReference>
<dbReference type="GO" id="GO:0004693">
    <property type="term" value="F:cyclin-dependent protein serine/threonine kinase activity"/>
    <property type="evidence" value="ECO:0007669"/>
    <property type="project" value="UniProtKB-EC"/>
</dbReference>
<dbReference type="GO" id="GO:0106310">
    <property type="term" value="F:protein serine kinase activity"/>
    <property type="evidence" value="ECO:0007669"/>
    <property type="project" value="RHEA"/>
</dbReference>
<dbReference type="GO" id="GO:0004674">
    <property type="term" value="F:protein serine/threonine kinase activity"/>
    <property type="evidence" value="ECO:0000318"/>
    <property type="project" value="GO_Central"/>
</dbReference>
<dbReference type="GO" id="GO:0007276">
    <property type="term" value="P:gamete generation"/>
    <property type="evidence" value="ECO:0000315"/>
    <property type="project" value="UniProtKB"/>
</dbReference>
<dbReference type="GO" id="GO:0040019">
    <property type="term" value="P:positive regulation of embryonic development"/>
    <property type="evidence" value="ECO:0000315"/>
    <property type="project" value="UniProtKB"/>
</dbReference>
<dbReference type="GO" id="GO:0051726">
    <property type="term" value="P:regulation of cell cycle"/>
    <property type="evidence" value="ECO:0000318"/>
    <property type="project" value="GO_Central"/>
</dbReference>
<dbReference type="CDD" id="cd07843">
    <property type="entry name" value="STKc_CDC2L1"/>
    <property type="match status" value="1"/>
</dbReference>
<dbReference type="FunFam" id="1.10.510.10:FF:000533">
    <property type="entry name" value="cyclin-dependent kinase 10"/>
    <property type="match status" value="1"/>
</dbReference>
<dbReference type="FunFam" id="3.30.200.20:FF:000054">
    <property type="entry name" value="Cyclin-dependent kinase 11B"/>
    <property type="match status" value="1"/>
</dbReference>
<dbReference type="Gene3D" id="3.30.200.20">
    <property type="entry name" value="Phosphorylase Kinase, domain 1"/>
    <property type="match status" value="1"/>
</dbReference>
<dbReference type="Gene3D" id="1.10.510.10">
    <property type="entry name" value="Transferase(Phosphotransferase) domain 1"/>
    <property type="match status" value="1"/>
</dbReference>
<dbReference type="InterPro" id="IPR050108">
    <property type="entry name" value="CDK"/>
</dbReference>
<dbReference type="InterPro" id="IPR045267">
    <property type="entry name" value="CDK11/PITSLRE_STKc"/>
</dbReference>
<dbReference type="InterPro" id="IPR011009">
    <property type="entry name" value="Kinase-like_dom_sf"/>
</dbReference>
<dbReference type="InterPro" id="IPR000719">
    <property type="entry name" value="Prot_kinase_dom"/>
</dbReference>
<dbReference type="InterPro" id="IPR008271">
    <property type="entry name" value="Ser/Thr_kinase_AS"/>
</dbReference>
<dbReference type="PANTHER" id="PTHR24056">
    <property type="entry name" value="CELL DIVISION PROTEIN KINASE"/>
    <property type="match status" value="1"/>
</dbReference>
<dbReference type="PANTHER" id="PTHR24056:SF107">
    <property type="entry name" value="CYCLIN-DEPENDENT KINASE 11A-RELATED"/>
    <property type="match status" value="1"/>
</dbReference>
<dbReference type="Pfam" id="PF00069">
    <property type="entry name" value="Pkinase"/>
    <property type="match status" value="1"/>
</dbReference>
<dbReference type="SMART" id="SM00220">
    <property type="entry name" value="S_TKc"/>
    <property type="match status" value="1"/>
</dbReference>
<dbReference type="SUPFAM" id="SSF56112">
    <property type="entry name" value="Protein kinase-like (PK-like)"/>
    <property type="match status" value="1"/>
</dbReference>
<dbReference type="PROSITE" id="PS50011">
    <property type="entry name" value="PROTEIN_KINASE_DOM"/>
    <property type="match status" value="1"/>
</dbReference>
<dbReference type="PROSITE" id="PS00108">
    <property type="entry name" value="PROTEIN_KINASE_ST"/>
    <property type="match status" value="1"/>
</dbReference>
<accession>Q09437</accession>
<accession>A0A2K5ATR0</accession>
<proteinExistence type="evidence at protein level"/>
<reference key="1">
    <citation type="journal article" date="1998" name="Science">
        <title>Genome sequence of the nematode C. elegans: a platform for investigating biology.</title>
        <authorList>
            <consortium name="The C. elegans sequencing consortium"/>
        </authorList>
    </citation>
    <scope>NUCLEOTIDE SEQUENCE [LARGE SCALE GENOMIC DNA]</scope>
    <source>
        <strain>Bristol N2</strain>
    </source>
</reference>
<reference key="2">
    <citation type="journal article" date="2018" name="Dev. Biol.">
        <title>CDK-11-Cyclin L is required for gametogenesis and fertility in C. elegans.</title>
        <authorList>
            <person name="Williams C.W."/>
            <person name="Iyer J."/>
            <person name="Liu Y."/>
            <person name="O'Connell K.F."/>
        </authorList>
    </citation>
    <scope>FUNCTION</scope>
    <scope>SUBCELLULAR LOCATION</scope>
    <scope>TISSUE SPECIFICITY</scope>
    <scope>DEVELOPMENTAL STAGE</scope>
    <scope>DISRUPTION PHENOTYPE</scope>
</reference>
<feature type="chain" id="PRO_0000086834" description="Cyclin-dependent kinase 11.1">
    <location>
        <begin position="1"/>
        <end position="719"/>
    </location>
</feature>
<feature type="domain" description="Protein kinase" evidence="2">
    <location>
        <begin position="356"/>
        <end position="647"/>
    </location>
</feature>
<feature type="region of interest" description="Disordered" evidence="4">
    <location>
        <begin position="1"/>
        <end position="215"/>
    </location>
</feature>
<feature type="region of interest" description="Disordered" evidence="4">
    <location>
        <begin position="231"/>
        <end position="315"/>
    </location>
</feature>
<feature type="region of interest" description="Disordered" evidence="4">
    <location>
        <begin position="657"/>
        <end position="689"/>
    </location>
</feature>
<feature type="compositionally biased region" description="Basic and acidic residues" evidence="4">
    <location>
        <begin position="1"/>
        <end position="20"/>
    </location>
</feature>
<feature type="compositionally biased region" description="Basic and acidic residues" evidence="4">
    <location>
        <begin position="38"/>
        <end position="48"/>
    </location>
</feature>
<feature type="compositionally biased region" description="Basic and acidic residues" evidence="4">
    <location>
        <begin position="78"/>
        <end position="129"/>
    </location>
</feature>
<feature type="compositionally biased region" description="Basic residues" evidence="4">
    <location>
        <begin position="130"/>
        <end position="140"/>
    </location>
</feature>
<feature type="compositionally biased region" description="Basic and acidic residues" evidence="4">
    <location>
        <begin position="141"/>
        <end position="163"/>
    </location>
</feature>
<feature type="compositionally biased region" description="Basic residues" evidence="4">
    <location>
        <begin position="164"/>
        <end position="174"/>
    </location>
</feature>
<feature type="compositionally biased region" description="Basic and acidic residues" evidence="4">
    <location>
        <begin position="191"/>
        <end position="215"/>
    </location>
</feature>
<feature type="compositionally biased region" description="Basic and acidic residues" evidence="4">
    <location>
        <begin position="264"/>
        <end position="274"/>
    </location>
</feature>
<feature type="compositionally biased region" description="Acidic residues" evidence="4">
    <location>
        <begin position="275"/>
        <end position="285"/>
    </location>
</feature>
<feature type="compositionally biased region" description="Basic and acidic residues" evidence="4">
    <location>
        <begin position="678"/>
        <end position="689"/>
    </location>
</feature>
<feature type="active site" description="Proton acceptor" evidence="2 3">
    <location>
        <position position="484"/>
    </location>
</feature>
<feature type="binding site" evidence="2">
    <location>
        <begin position="362"/>
        <end position="370"/>
    </location>
    <ligand>
        <name>ATP</name>
        <dbReference type="ChEBI" id="CHEBI:30616"/>
    </ligand>
</feature>
<feature type="binding site" evidence="2">
    <location>
        <position position="385"/>
    </location>
    <ligand>
        <name>ATP</name>
        <dbReference type="ChEBI" id="CHEBI:30616"/>
    </ligand>
</feature>
<feature type="splice variant" id="VSP_060204" description="In isoform b." evidence="7">
    <location>
        <begin position="13"/>
        <end position="22"/>
    </location>
</feature>
<comment type="function">
    <text evidence="5">Probable cyclin-dependent kinase whose activity is most likely regulated by the cyclin cyl-1/Cylin-L (PubMed:29886128). Important for normal oocyte and sperm development; probably required during multiple stages of gametogenesis (PubMed:29886128). Plays a role in the activation of RAS-ERK signaling in the germ line (PubMed:29886128). Also acts partially redundantly with cdk-11.2 to ensure embryonic viability (PubMed:29886128).</text>
</comment>
<comment type="catalytic activity">
    <reaction evidence="1">
        <text>L-seryl-[protein] + ATP = O-phospho-L-seryl-[protein] + ADP + H(+)</text>
        <dbReference type="Rhea" id="RHEA:17989"/>
        <dbReference type="Rhea" id="RHEA-COMP:9863"/>
        <dbReference type="Rhea" id="RHEA-COMP:11604"/>
        <dbReference type="ChEBI" id="CHEBI:15378"/>
        <dbReference type="ChEBI" id="CHEBI:29999"/>
        <dbReference type="ChEBI" id="CHEBI:30616"/>
        <dbReference type="ChEBI" id="CHEBI:83421"/>
        <dbReference type="ChEBI" id="CHEBI:456216"/>
        <dbReference type="EC" id="2.7.11.22"/>
    </reaction>
</comment>
<comment type="catalytic activity">
    <reaction evidence="1">
        <text>L-threonyl-[protein] + ATP = O-phospho-L-threonyl-[protein] + ADP + H(+)</text>
        <dbReference type="Rhea" id="RHEA:46608"/>
        <dbReference type="Rhea" id="RHEA-COMP:11060"/>
        <dbReference type="Rhea" id="RHEA-COMP:11605"/>
        <dbReference type="ChEBI" id="CHEBI:15378"/>
        <dbReference type="ChEBI" id="CHEBI:30013"/>
        <dbReference type="ChEBI" id="CHEBI:30616"/>
        <dbReference type="ChEBI" id="CHEBI:61977"/>
        <dbReference type="ChEBI" id="CHEBI:456216"/>
        <dbReference type="EC" id="2.7.11.22"/>
    </reaction>
</comment>
<comment type="subcellular location">
    <subcellularLocation>
        <location evidence="5">Nucleus</location>
    </subcellularLocation>
</comment>
<comment type="alternative products">
    <event type="alternative splicing"/>
    <isoform>
        <id>Q09437-1</id>
        <name evidence="8">a</name>
        <sequence type="displayed"/>
    </isoform>
    <isoform>
        <id>Q09437-2</id>
        <name evidence="9">b</name>
        <sequence type="described" ref="VSP_060204"/>
    </isoform>
</comment>
<comment type="tissue specificity">
    <text evidence="5">Broadly expressed in somatic and germ line cells (at protein level) (PubMed:29886128). Not expressed in sperm (at protein level) (PubMed:29886128).</text>
</comment>
<comment type="developmental stage">
    <text evidence="5">Ubiquitously expressed during all stages of embryogenesis, but expression is low during the first few cell cycles (at protein level).</text>
</comment>
<comment type="disruption phenotype">
    <text evidence="5">Viable, but exhibit low fecundity and have a reduced brood size (PubMed:29886128). RNAi-mediated knockdown results in fertile adults that produce viable progeny (PubMed:29886128). RNAi-mediated knockdown in L1 stage cdk-11.2 bs101 mutants results in sterility (PubMed:29886128). RNAi-mediated knockdown in L4 stage cdk-11.2 bs101 mutants results in fertile adults that produce few viable embryos (PubMed:29886128).</text>
</comment>
<comment type="similarity">
    <text evidence="7">Belongs to the protein kinase superfamily. CMGC Ser/Thr protein kinase family. CDC2/CDKX subfamily.</text>
</comment>
<sequence>MSDHLGSSHDEGELSDESHKKSQRASSSDEPNPAKSNKGLESKMRESILSRLSKRKNSESDDDTTEQRFSIQPKNAQKAKEDRYRDKERDKKREKDKRDDRRDVRGPDARQKDRDFKGRQERSGRDQKVHEHRHHHHHRKHETDGHRTNRSNRDRSSERDSEKHKRHIDRHKKSSTTSPDNDKSPHKKSKHTDVPADAKLFDRILDPNYKKKDDDVLVIEDVEMSPIEILEEKEEKEIVEFTIDSPAGPKKYSKFESDPESDHDDTKPKSPGKAEDDDDVIEVLDDALHSDDDADSDEDKYLKTPEDREWEEMTETEQRLHKEAMKKRASMKQKTLIAQLPVFYPGLMGCRNIDEYECVNRVDEGTFGVVYRGKDKRTDEIVALKRLKMEKEKEGFPITALREINMLLKAGNHPNIVNVKEILLGSNMDKIYMAMEFVEHDMKSLLDTMSRRNKRFSIGEQKTLLQQLLSGIEHMHKLWILHRDLKTSNLLMSHKGILKIADFGLAREYGDPLKKFTSIVVTLWYRSPELLLGTRLYSTPVDMWSVGCIMAEFILLKPLFPGRGELEQIKKIFMEMGTPTESIWPGVTELDGWKALTFEKYPYNQLRKRFLAGRLLNDTGFKLLNGLLTLDPKNRFSATQALDHEWFTEEPYPVPPEEFPTFPAKSEQNKAPPPAKQKQQENRISHVDPETAKLLKQFEVRPEQVKPGGFSLKFDPTRF</sequence>
<organism>
    <name type="scientific">Caenorhabditis elegans</name>
    <dbReference type="NCBI Taxonomy" id="6239"/>
    <lineage>
        <taxon>Eukaryota</taxon>
        <taxon>Metazoa</taxon>
        <taxon>Ecdysozoa</taxon>
        <taxon>Nematoda</taxon>
        <taxon>Chromadorea</taxon>
        <taxon>Rhabditida</taxon>
        <taxon>Rhabditina</taxon>
        <taxon>Rhabditomorpha</taxon>
        <taxon>Rhabditoidea</taxon>
        <taxon>Rhabditidae</taxon>
        <taxon>Peloderinae</taxon>
        <taxon>Caenorhabditis</taxon>
    </lineage>
</organism>
<keyword id="KW-0025">Alternative splicing</keyword>
<keyword id="KW-0067">ATP-binding</keyword>
<keyword id="KW-0418">Kinase</keyword>
<keyword id="KW-0547">Nucleotide-binding</keyword>
<keyword id="KW-0539">Nucleus</keyword>
<keyword id="KW-1185">Reference proteome</keyword>
<keyword id="KW-0723">Serine/threonine-protein kinase</keyword>
<keyword id="KW-0808">Transferase</keyword>
<name>CD111_CAEEL</name>
<evidence type="ECO:0000250" key="1">
    <source>
        <dbReference type="UniProtKB" id="P24941"/>
    </source>
</evidence>
<evidence type="ECO:0000255" key="2">
    <source>
        <dbReference type="PROSITE-ProRule" id="PRU00159"/>
    </source>
</evidence>
<evidence type="ECO:0000255" key="3">
    <source>
        <dbReference type="PROSITE-ProRule" id="PRU10027"/>
    </source>
</evidence>
<evidence type="ECO:0000256" key="4">
    <source>
        <dbReference type="SAM" id="MobiDB-lite"/>
    </source>
</evidence>
<evidence type="ECO:0000269" key="5">
    <source>
    </source>
</evidence>
<evidence type="ECO:0000303" key="6">
    <source>
    </source>
</evidence>
<evidence type="ECO:0000305" key="7"/>
<evidence type="ECO:0000312" key="8">
    <source>
        <dbReference type="WormBase" id="B0495.2a"/>
    </source>
</evidence>
<evidence type="ECO:0000312" key="9">
    <source>
        <dbReference type="WormBase" id="B0495.2b"/>
    </source>
</evidence>
<protein>
    <recommendedName>
        <fullName evidence="8">Cyclin-dependent kinase 11.1</fullName>
        <ecNumber evidence="1">2.7.11.22</ecNumber>
    </recommendedName>
</protein>
<gene>
    <name evidence="6 8" type="primary">cdk-11.1</name>
    <name evidence="8" type="ORF">B0495.2</name>
</gene>